<keyword id="KW-0002">3D-structure</keyword>
<keyword id="KW-1064">Adaptive immunity</keyword>
<keyword id="KW-0025">Alternative splicing</keyword>
<keyword id="KW-0391">Immunity</keyword>
<keyword id="KW-0399">Innate immunity</keyword>
<keyword id="KW-0597">Phosphoprotein</keyword>
<keyword id="KW-1267">Proteomics identification</keyword>
<keyword id="KW-1185">Reference proteome</keyword>
<keyword id="KW-0727">SH2 domain</keyword>
<accession>O14796</accession>
<accession>B2RBN6</accession>
<accession>Q5T0L1</accession>
<accession>Q8NI18</accession>
<accession>Q969K9</accession>
<proteinExistence type="evidence at protein level"/>
<dbReference type="EMBL" id="AF256653">
    <property type="protein sequence ID" value="AAL26000.1"/>
    <property type="molecule type" value="mRNA"/>
</dbReference>
<dbReference type="EMBL" id="AF403479">
    <property type="protein sequence ID" value="AAL27357.1"/>
    <property type="molecule type" value="mRNA"/>
</dbReference>
<dbReference type="EMBL" id="AF484964">
    <property type="protein sequence ID" value="AAM28522.1"/>
    <property type="molecule type" value="mRNA"/>
</dbReference>
<dbReference type="EMBL" id="AK097162">
    <property type="protein sequence ID" value="BAC04968.1"/>
    <property type="molecule type" value="mRNA"/>
</dbReference>
<dbReference type="EMBL" id="AK314743">
    <property type="protein sequence ID" value="BAG37283.1"/>
    <property type="molecule type" value="mRNA"/>
</dbReference>
<dbReference type="EMBL" id="AL512785">
    <property type="status" value="NOT_ANNOTATED_CDS"/>
    <property type="molecule type" value="Genomic_DNA"/>
</dbReference>
<dbReference type="EMBL" id="CH471067">
    <property type="protein sequence ID" value="EAW90703.1"/>
    <property type="molecule type" value="Genomic_DNA"/>
</dbReference>
<dbReference type="EMBL" id="BC022407">
    <property type="protein sequence ID" value="AAH22407.1"/>
    <property type="molecule type" value="mRNA"/>
</dbReference>
<dbReference type="EMBL" id="BC066595">
    <property type="protein sequence ID" value="AAH66595.1"/>
    <property type="molecule type" value="mRNA"/>
</dbReference>
<dbReference type="EMBL" id="AF020264">
    <property type="protein sequence ID" value="AAB70927.1"/>
    <property type="molecule type" value="Genomic_DNA"/>
</dbReference>
<dbReference type="CCDS" id="CCDS30928.1">
    <molecule id="O14796-1"/>
</dbReference>
<dbReference type="RefSeq" id="NP_444512.2">
    <molecule id="O14796-1"/>
    <property type="nucleotide sequence ID" value="NM_053282.5"/>
</dbReference>
<dbReference type="PDB" id="5KAZ">
    <property type="method" value="X-ray"/>
    <property type="resolution" value="1.70 A"/>
    <property type="chains" value="A=1-104"/>
</dbReference>
<dbReference type="PDBsum" id="5KAZ"/>
<dbReference type="SMR" id="O14796"/>
<dbReference type="BioGRID" id="125563">
    <property type="interactions" value="29"/>
</dbReference>
<dbReference type="FunCoup" id="O14796">
    <property type="interactions" value="617"/>
</dbReference>
<dbReference type="IntAct" id="O14796">
    <property type="interactions" value="41"/>
</dbReference>
<dbReference type="MINT" id="O14796"/>
<dbReference type="STRING" id="9606.ENSP00000356906"/>
<dbReference type="iPTMnet" id="O14796"/>
<dbReference type="PhosphoSitePlus" id="O14796"/>
<dbReference type="BioMuta" id="SH2D1B"/>
<dbReference type="jPOST" id="O14796"/>
<dbReference type="MassIVE" id="O14796"/>
<dbReference type="PaxDb" id="9606-ENSP00000356906"/>
<dbReference type="PeptideAtlas" id="O14796"/>
<dbReference type="ProteomicsDB" id="48245">
    <molecule id="O14796-1"/>
</dbReference>
<dbReference type="ProteomicsDB" id="48246">
    <molecule id="O14796-2"/>
</dbReference>
<dbReference type="Antibodypedia" id="34320">
    <property type="antibodies" value="238 antibodies from 32 providers"/>
</dbReference>
<dbReference type="DNASU" id="117157"/>
<dbReference type="Ensembl" id="ENST00000367929.3">
    <molecule id="O14796-1"/>
    <property type="protein sequence ID" value="ENSP00000356906.2"/>
    <property type="gene ID" value="ENSG00000198574.6"/>
</dbReference>
<dbReference type="GeneID" id="117157"/>
<dbReference type="KEGG" id="hsa:117157"/>
<dbReference type="MANE-Select" id="ENST00000367929.3">
    <property type="protein sequence ID" value="ENSP00000356906.2"/>
    <property type="RefSeq nucleotide sequence ID" value="NM_053282.5"/>
    <property type="RefSeq protein sequence ID" value="NP_444512.2"/>
</dbReference>
<dbReference type="UCSC" id="uc001gbz.2">
    <molecule id="O14796-1"/>
    <property type="organism name" value="human"/>
</dbReference>
<dbReference type="AGR" id="HGNC:30416"/>
<dbReference type="CTD" id="117157"/>
<dbReference type="DisGeNET" id="117157"/>
<dbReference type="GeneCards" id="SH2D1B"/>
<dbReference type="HGNC" id="HGNC:30416">
    <property type="gene designation" value="SH2D1B"/>
</dbReference>
<dbReference type="HPA" id="ENSG00000198574">
    <property type="expression patterns" value="Tissue enhanced (lymphoid tissue, skeletal muscle, tongue)"/>
</dbReference>
<dbReference type="MIM" id="608510">
    <property type="type" value="gene"/>
</dbReference>
<dbReference type="neXtProt" id="NX_O14796"/>
<dbReference type="OpenTargets" id="ENSG00000198574"/>
<dbReference type="PharmGKB" id="PA142670926"/>
<dbReference type="VEuPathDB" id="HostDB:ENSG00000198574"/>
<dbReference type="eggNOG" id="KOG0565">
    <property type="taxonomic scope" value="Eukaryota"/>
</dbReference>
<dbReference type="GeneTree" id="ENSGT00940000163577"/>
<dbReference type="HOGENOM" id="CLU_125532_0_0_1"/>
<dbReference type="InParanoid" id="O14796"/>
<dbReference type="OMA" id="PRWRRSQ"/>
<dbReference type="OrthoDB" id="10053436at2759"/>
<dbReference type="PAN-GO" id="O14796">
    <property type="GO annotations" value="3 GO annotations based on evolutionary models"/>
</dbReference>
<dbReference type="PhylomeDB" id="O14796"/>
<dbReference type="TreeFam" id="TF343096"/>
<dbReference type="PathwayCommons" id="O14796"/>
<dbReference type="Reactome" id="R-HSA-198933">
    <property type="pathway name" value="Immunoregulatory interactions between a Lymphoid and a non-Lymphoid cell"/>
</dbReference>
<dbReference type="SignaLink" id="O14796"/>
<dbReference type="BioGRID-ORCS" id="117157">
    <property type="hits" value="15 hits in 1152 CRISPR screens"/>
</dbReference>
<dbReference type="GeneWiki" id="SH2D1B"/>
<dbReference type="GenomeRNAi" id="117157"/>
<dbReference type="Pharos" id="O14796">
    <property type="development level" value="Tbio"/>
</dbReference>
<dbReference type="PRO" id="PR:O14796"/>
<dbReference type="Proteomes" id="UP000005640">
    <property type="component" value="Chromosome 1"/>
</dbReference>
<dbReference type="RNAct" id="O14796">
    <property type="molecule type" value="protein"/>
</dbReference>
<dbReference type="Bgee" id="ENSG00000198574">
    <property type="expression patterns" value="Expressed in granulocyte and 103 other cell types or tissues"/>
</dbReference>
<dbReference type="GO" id="GO:0005829">
    <property type="term" value="C:cytosol"/>
    <property type="evidence" value="ECO:0000304"/>
    <property type="project" value="Reactome"/>
</dbReference>
<dbReference type="GO" id="GO:0030674">
    <property type="term" value="F:protein-macromolecule adaptor activity"/>
    <property type="evidence" value="ECO:0000304"/>
    <property type="project" value="UniProtKB"/>
</dbReference>
<dbReference type="GO" id="GO:0002250">
    <property type="term" value="P:adaptive immune response"/>
    <property type="evidence" value="ECO:0007669"/>
    <property type="project" value="UniProtKB-KW"/>
</dbReference>
<dbReference type="GO" id="GO:0045087">
    <property type="term" value="P:innate immune response"/>
    <property type="evidence" value="ECO:0007669"/>
    <property type="project" value="UniProtKB-KW"/>
</dbReference>
<dbReference type="GO" id="GO:0002366">
    <property type="term" value="P:leukocyte activation involved in immune response"/>
    <property type="evidence" value="ECO:0000250"/>
    <property type="project" value="UniProtKB"/>
</dbReference>
<dbReference type="GO" id="GO:0045089">
    <property type="term" value="P:positive regulation of innate immune response"/>
    <property type="evidence" value="ECO:0000250"/>
    <property type="project" value="UniProtKB"/>
</dbReference>
<dbReference type="GO" id="GO:0002717">
    <property type="term" value="P:positive regulation of natural killer cell mediated immunity"/>
    <property type="evidence" value="ECO:0000250"/>
    <property type="project" value="UniProtKB"/>
</dbReference>
<dbReference type="CDD" id="cd10342">
    <property type="entry name" value="SH2_SAP1"/>
    <property type="match status" value="1"/>
</dbReference>
<dbReference type="FunFam" id="3.30.505.10:FF:000092">
    <property type="entry name" value="SH2 domain containing 1B"/>
    <property type="match status" value="1"/>
</dbReference>
<dbReference type="Gene3D" id="3.30.505.10">
    <property type="entry name" value="SH2 domain"/>
    <property type="match status" value="1"/>
</dbReference>
<dbReference type="InterPro" id="IPR035049">
    <property type="entry name" value="EAT2_SH2"/>
</dbReference>
<dbReference type="InterPro" id="IPR000980">
    <property type="entry name" value="SH2"/>
</dbReference>
<dbReference type="InterPro" id="IPR036860">
    <property type="entry name" value="SH2_dom_sf"/>
</dbReference>
<dbReference type="PANTHER" id="PTHR46051:SF3">
    <property type="entry name" value="PHOSPHATIDYLINOSITOL 3,4,5-TRISPHOSPHATE 5-PHOSPHATASE 1"/>
    <property type="match status" value="1"/>
</dbReference>
<dbReference type="PANTHER" id="PTHR46051">
    <property type="entry name" value="SH2 DOMAIN-CONTAINING PROTEIN"/>
    <property type="match status" value="1"/>
</dbReference>
<dbReference type="Pfam" id="PF00017">
    <property type="entry name" value="SH2"/>
    <property type="match status" value="1"/>
</dbReference>
<dbReference type="PRINTS" id="PR00401">
    <property type="entry name" value="SH2DOMAIN"/>
</dbReference>
<dbReference type="SMART" id="SM00252">
    <property type="entry name" value="SH2"/>
    <property type="match status" value="1"/>
</dbReference>
<dbReference type="SUPFAM" id="SSF55550">
    <property type="entry name" value="SH2 domain"/>
    <property type="match status" value="1"/>
</dbReference>
<dbReference type="PROSITE" id="PS50001">
    <property type="entry name" value="SH2"/>
    <property type="match status" value="1"/>
</dbReference>
<protein>
    <recommendedName>
        <fullName>SH2 domain-containing protein 1B</fullName>
    </recommendedName>
    <alternativeName>
        <fullName>EWS/FLI1-activated transcript 2</fullName>
        <shortName>EAT-2</shortName>
    </alternativeName>
</protein>
<reference key="1">
    <citation type="journal article" date="2001" name="EMBO J.">
        <title>Structural basis for the interaction of the free SH2 domain EAT-2 with SLAM receptors in hematopoietic cells.</title>
        <authorList>
            <person name="Morra M."/>
            <person name="Lu J."/>
            <person name="Poy F."/>
            <person name="Martin M."/>
            <person name="Sayos J."/>
            <person name="Calpe S."/>
            <person name="Gullo C."/>
            <person name="Howie D."/>
            <person name="Rietdijk S."/>
            <person name="Thompson A."/>
            <person name="Coyle A.J."/>
            <person name="Denny C."/>
            <person name="Yaffe M.B."/>
            <person name="Engel P."/>
            <person name="Eck M.J."/>
            <person name="Terhorst C."/>
        </authorList>
    </citation>
    <scope>NUCLEOTIDE SEQUENCE [MRNA] (ISOFORM 1)</scope>
    <scope>CHARACTERIZATION</scope>
</reference>
<reference key="2">
    <citation type="submission" date="2001-07" db="EMBL/GenBank/DDBJ databases">
        <authorList>
            <person name="Colonna M."/>
        </authorList>
    </citation>
    <scope>NUCLEOTIDE SEQUENCE [MRNA] (ISOFORM 1)</scope>
    <source>
        <tissue>Leukocyte</tissue>
    </source>
</reference>
<reference key="3">
    <citation type="journal article" date="2002" name="Eur. J. Immunol.">
        <title>CD84 is up-regulated on a major population of human memory B cells and recruits the SH2 domain containing proteins SAP and EAT-2.</title>
        <authorList>
            <person name="Tangye S.G."/>
            <person name="van de Weerdt B.C.M."/>
            <person name="Avery D.T."/>
            <person name="Hodgkin P.D."/>
        </authorList>
    </citation>
    <scope>NUCLEOTIDE SEQUENCE [MRNA] (ISOFORM 1)</scope>
    <scope>INTERACTION WITH CD84</scope>
    <scope>VARIANT LYS-122</scope>
</reference>
<reference key="4">
    <citation type="journal article" date="2004" name="Nat. Genet.">
        <title>Complete sequencing and characterization of 21,243 full-length human cDNAs.</title>
        <authorList>
            <person name="Ota T."/>
            <person name="Suzuki Y."/>
            <person name="Nishikawa T."/>
            <person name="Otsuki T."/>
            <person name="Sugiyama T."/>
            <person name="Irie R."/>
            <person name="Wakamatsu A."/>
            <person name="Hayashi K."/>
            <person name="Sato H."/>
            <person name="Nagai K."/>
            <person name="Kimura K."/>
            <person name="Makita H."/>
            <person name="Sekine M."/>
            <person name="Obayashi M."/>
            <person name="Nishi T."/>
            <person name="Shibahara T."/>
            <person name="Tanaka T."/>
            <person name="Ishii S."/>
            <person name="Yamamoto J."/>
            <person name="Saito K."/>
            <person name="Kawai Y."/>
            <person name="Isono Y."/>
            <person name="Nakamura Y."/>
            <person name="Nagahari K."/>
            <person name="Murakami K."/>
            <person name="Yasuda T."/>
            <person name="Iwayanagi T."/>
            <person name="Wagatsuma M."/>
            <person name="Shiratori A."/>
            <person name="Sudo H."/>
            <person name="Hosoiri T."/>
            <person name="Kaku Y."/>
            <person name="Kodaira H."/>
            <person name="Kondo H."/>
            <person name="Sugawara M."/>
            <person name="Takahashi M."/>
            <person name="Kanda K."/>
            <person name="Yokoi T."/>
            <person name="Furuya T."/>
            <person name="Kikkawa E."/>
            <person name="Omura Y."/>
            <person name="Abe K."/>
            <person name="Kamihara K."/>
            <person name="Katsuta N."/>
            <person name="Sato K."/>
            <person name="Tanikawa M."/>
            <person name="Yamazaki M."/>
            <person name="Ninomiya K."/>
            <person name="Ishibashi T."/>
            <person name="Yamashita H."/>
            <person name="Murakawa K."/>
            <person name="Fujimori K."/>
            <person name="Tanai H."/>
            <person name="Kimata M."/>
            <person name="Watanabe M."/>
            <person name="Hiraoka S."/>
            <person name="Chiba Y."/>
            <person name="Ishida S."/>
            <person name="Ono Y."/>
            <person name="Takiguchi S."/>
            <person name="Watanabe S."/>
            <person name="Yosida M."/>
            <person name="Hotuta T."/>
            <person name="Kusano J."/>
            <person name="Kanehori K."/>
            <person name="Takahashi-Fujii A."/>
            <person name="Hara H."/>
            <person name="Tanase T.-O."/>
            <person name="Nomura Y."/>
            <person name="Togiya S."/>
            <person name="Komai F."/>
            <person name="Hara R."/>
            <person name="Takeuchi K."/>
            <person name="Arita M."/>
            <person name="Imose N."/>
            <person name="Musashino K."/>
            <person name="Yuuki H."/>
            <person name="Oshima A."/>
            <person name="Sasaki N."/>
            <person name="Aotsuka S."/>
            <person name="Yoshikawa Y."/>
            <person name="Matsunawa H."/>
            <person name="Ichihara T."/>
            <person name="Shiohata N."/>
            <person name="Sano S."/>
            <person name="Moriya S."/>
            <person name="Momiyama H."/>
            <person name="Satoh N."/>
            <person name="Takami S."/>
            <person name="Terashima Y."/>
            <person name="Suzuki O."/>
            <person name="Nakagawa S."/>
            <person name="Senoh A."/>
            <person name="Mizoguchi H."/>
            <person name="Goto Y."/>
            <person name="Shimizu F."/>
            <person name="Wakebe H."/>
            <person name="Hishigaki H."/>
            <person name="Watanabe T."/>
            <person name="Sugiyama A."/>
            <person name="Takemoto M."/>
            <person name="Kawakami B."/>
            <person name="Yamazaki M."/>
            <person name="Watanabe K."/>
            <person name="Kumagai A."/>
            <person name="Itakura S."/>
            <person name="Fukuzumi Y."/>
            <person name="Fujimori Y."/>
            <person name="Komiyama M."/>
            <person name="Tashiro H."/>
            <person name="Tanigami A."/>
            <person name="Fujiwara T."/>
            <person name="Ono T."/>
            <person name="Yamada K."/>
            <person name="Fujii Y."/>
            <person name="Ozaki K."/>
            <person name="Hirao M."/>
            <person name="Ohmori Y."/>
            <person name="Kawabata A."/>
            <person name="Hikiji T."/>
            <person name="Kobatake N."/>
            <person name="Inagaki H."/>
            <person name="Ikema Y."/>
            <person name="Okamoto S."/>
            <person name="Okitani R."/>
            <person name="Kawakami T."/>
            <person name="Noguchi S."/>
            <person name="Itoh T."/>
            <person name="Shigeta K."/>
            <person name="Senba T."/>
            <person name="Matsumura K."/>
            <person name="Nakajima Y."/>
            <person name="Mizuno T."/>
            <person name="Morinaga M."/>
            <person name="Sasaki M."/>
            <person name="Togashi T."/>
            <person name="Oyama M."/>
            <person name="Hata H."/>
            <person name="Watanabe M."/>
            <person name="Komatsu T."/>
            <person name="Mizushima-Sugano J."/>
            <person name="Satoh T."/>
            <person name="Shirai Y."/>
            <person name="Takahashi Y."/>
            <person name="Nakagawa K."/>
            <person name="Okumura K."/>
            <person name="Nagase T."/>
            <person name="Nomura N."/>
            <person name="Kikuchi H."/>
            <person name="Masuho Y."/>
            <person name="Yamashita R."/>
            <person name="Nakai K."/>
            <person name="Yada T."/>
            <person name="Nakamura Y."/>
            <person name="Ohara O."/>
            <person name="Isogai T."/>
            <person name="Sugano S."/>
        </authorList>
    </citation>
    <scope>NUCLEOTIDE SEQUENCE [LARGE SCALE MRNA] (ISOFORM 1)</scope>
    <source>
        <tissue>Spleen</tissue>
    </source>
</reference>
<reference key="5">
    <citation type="journal article" date="2006" name="Nature">
        <title>The DNA sequence and biological annotation of human chromosome 1.</title>
        <authorList>
            <person name="Gregory S.G."/>
            <person name="Barlow K.F."/>
            <person name="McLay K.E."/>
            <person name="Kaul R."/>
            <person name="Swarbreck D."/>
            <person name="Dunham A."/>
            <person name="Scott C.E."/>
            <person name="Howe K.L."/>
            <person name="Woodfine K."/>
            <person name="Spencer C.C.A."/>
            <person name="Jones M.C."/>
            <person name="Gillson C."/>
            <person name="Searle S."/>
            <person name="Zhou Y."/>
            <person name="Kokocinski F."/>
            <person name="McDonald L."/>
            <person name="Evans R."/>
            <person name="Phillips K."/>
            <person name="Atkinson A."/>
            <person name="Cooper R."/>
            <person name="Jones C."/>
            <person name="Hall R.E."/>
            <person name="Andrews T.D."/>
            <person name="Lloyd C."/>
            <person name="Ainscough R."/>
            <person name="Almeida J.P."/>
            <person name="Ambrose K.D."/>
            <person name="Anderson F."/>
            <person name="Andrew R.W."/>
            <person name="Ashwell R.I.S."/>
            <person name="Aubin K."/>
            <person name="Babbage A.K."/>
            <person name="Bagguley C.L."/>
            <person name="Bailey J."/>
            <person name="Beasley H."/>
            <person name="Bethel G."/>
            <person name="Bird C.P."/>
            <person name="Bray-Allen S."/>
            <person name="Brown J.Y."/>
            <person name="Brown A.J."/>
            <person name="Buckley D."/>
            <person name="Burton J."/>
            <person name="Bye J."/>
            <person name="Carder C."/>
            <person name="Chapman J.C."/>
            <person name="Clark S.Y."/>
            <person name="Clarke G."/>
            <person name="Clee C."/>
            <person name="Cobley V."/>
            <person name="Collier R.E."/>
            <person name="Corby N."/>
            <person name="Coville G.J."/>
            <person name="Davies J."/>
            <person name="Deadman R."/>
            <person name="Dunn M."/>
            <person name="Earthrowl M."/>
            <person name="Ellington A.G."/>
            <person name="Errington H."/>
            <person name="Frankish A."/>
            <person name="Frankland J."/>
            <person name="French L."/>
            <person name="Garner P."/>
            <person name="Garnett J."/>
            <person name="Gay L."/>
            <person name="Ghori M.R.J."/>
            <person name="Gibson R."/>
            <person name="Gilby L.M."/>
            <person name="Gillett W."/>
            <person name="Glithero R.J."/>
            <person name="Grafham D.V."/>
            <person name="Griffiths C."/>
            <person name="Griffiths-Jones S."/>
            <person name="Grocock R."/>
            <person name="Hammond S."/>
            <person name="Harrison E.S.I."/>
            <person name="Hart E."/>
            <person name="Haugen E."/>
            <person name="Heath P.D."/>
            <person name="Holmes S."/>
            <person name="Holt K."/>
            <person name="Howden P.J."/>
            <person name="Hunt A.R."/>
            <person name="Hunt S.E."/>
            <person name="Hunter G."/>
            <person name="Isherwood J."/>
            <person name="James R."/>
            <person name="Johnson C."/>
            <person name="Johnson D."/>
            <person name="Joy A."/>
            <person name="Kay M."/>
            <person name="Kershaw J.K."/>
            <person name="Kibukawa M."/>
            <person name="Kimberley A.M."/>
            <person name="King A."/>
            <person name="Knights A.J."/>
            <person name="Lad H."/>
            <person name="Laird G."/>
            <person name="Lawlor S."/>
            <person name="Leongamornlert D.A."/>
            <person name="Lloyd D.M."/>
            <person name="Loveland J."/>
            <person name="Lovell J."/>
            <person name="Lush M.J."/>
            <person name="Lyne R."/>
            <person name="Martin S."/>
            <person name="Mashreghi-Mohammadi M."/>
            <person name="Matthews L."/>
            <person name="Matthews N.S.W."/>
            <person name="McLaren S."/>
            <person name="Milne S."/>
            <person name="Mistry S."/>
            <person name="Moore M.J.F."/>
            <person name="Nickerson T."/>
            <person name="O'Dell C.N."/>
            <person name="Oliver K."/>
            <person name="Palmeiri A."/>
            <person name="Palmer S.A."/>
            <person name="Parker A."/>
            <person name="Patel D."/>
            <person name="Pearce A.V."/>
            <person name="Peck A.I."/>
            <person name="Pelan S."/>
            <person name="Phelps K."/>
            <person name="Phillimore B.J."/>
            <person name="Plumb R."/>
            <person name="Rajan J."/>
            <person name="Raymond C."/>
            <person name="Rouse G."/>
            <person name="Saenphimmachak C."/>
            <person name="Sehra H.K."/>
            <person name="Sheridan E."/>
            <person name="Shownkeen R."/>
            <person name="Sims S."/>
            <person name="Skuce C.D."/>
            <person name="Smith M."/>
            <person name="Steward C."/>
            <person name="Subramanian S."/>
            <person name="Sycamore N."/>
            <person name="Tracey A."/>
            <person name="Tromans A."/>
            <person name="Van Helmond Z."/>
            <person name="Wall M."/>
            <person name="Wallis J.M."/>
            <person name="White S."/>
            <person name="Whitehead S.L."/>
            <person name="Wilkinson J.E."/>
            <person name="Willey D.L."/>
            <person name="Williams H."/>
            <person name="Wilming L."/>
            <person name="Wray P.W."/>
            <person name="Wu Z."/>
            <person name="Coulson A."/>
            <person name="Vaudin M."/>
            <person name="Sulston J.E."/>
            <person name="Durbin R.M."/>
            <person name="Hubbard T."/>
            <person name="Wooster R."/>
            <person name="Dunham I."/>
            <person name="Carter N.P."/>
            <person name="McVean G."/>
            <person name="Ross M.T."/>
            <person name="Harrow J."/>
            <person name="Olson M.V."/>
            <person name="Beck S."/>
            <person name="Rogers J."/>
            <person name="Bentley D.R."/>
        </authorList>
    </citation>
    <scope>NUCLEOTIDE SEQUENCE [LARGE SCALE GENOMIC DNA]</scope>
</reference>
<reference key="6">
    <citation type="submission" date="2005-07" db="EMBL/GenBank/DDBJ databases">
        <authorList>
            <person name="Mural R.J."/>
            <person name="Istrail S."/>
            <person name="Sutton G.G."/>
            <person name="Florea L."/>
            <person name="Halpern A.L."/>
            <person name="Mobarry C.M."/>
            <person name="Lippert R."/>
            <person name="Walenz B."/>
            <person name="Shatkay H."/>
            <person name="Dew I."/>
            <person name="Miller J.R."/>
            <person name="Flanigan M.J."/>
            <person name="Edwards N.J."/>
            <person name="Bolanos R."/>
            <person name="Fasulo D."/>
            <person name="Halldorsson B.V."/>
            <person name="Hannenhalli S."/>
            <person name="Turner R."/>
            <person name="Yooseph S."/>
            <person name="Lu F."/>
            <person name="Nusskern D.R."/>
            <person name="Shue B.C."/>
            <person name="Zheng X.H."/>
            <person name="Zhong F."/>
            <person name="Delcher A.L."/>
            <person name="Huson D.H."/>
            <person name="Kravitz S.A."/>
            <person name="Mouchard L."/>
            <person name="Reinert K."/>
            <person name="Remington K.A."/>
            <person name="Clark A.G."/>
            <person name="Waterman M.S."/>
            <person name="Eichler E.E."/>
            <person name="Adams M.D."/>
            <person name="Hunkapiller M.W."/>
            <person name="Myers E.W."/>
            <person name="Venter J.C."/>
        </authorList>
    </citation>
    <scope>NUCLEOTIDE SEQUENCE [LARGE SCALE GENOMIC DNA]</scope>
</reference>
<reference key="7">
    <citation type="journal article" date="2004" name="Genome Res.">
        <title>The status, quality, and expansion of the NIH full-length cDNA project: the Mammalian Gene Collection (MGC).</title>
        <authorList>
            <consortium name="The MGC Project Team"/>
        </authorList>
    </citation>
    <scope>NUCLEOTIDE SEQUENCE [LARGE SCALE MRNA] (ISOFORMS 1 AND 2)</scope>
    <source>
        <tissue>Leukocyte</tissue>
        <tissue>Lung</tissue>
    </source>
</reference>
<reference key="8">
    <citation type="journal article" date="1996" name="Oncogene">
        <title>EAT-2 is a novel SH2 domain containing protein that is up regulated by Ewing's sarcoma EWS/FLI1 fusion gene.</title>
        <authorList>
            <person name="Thompson A.D."/>
            <person name="Braun B.S."/>
            <person name="Arvand A."/>
            <person name="Stewart S.D."/>
            <person name="May W.A."/>
            <person name="Chen E."/>
            <person name="Korenberg J."/>
            <person name="Denny C."/>
        </authorList>
    </citation>
    <scope>NUCLEOTIDE SEQUENCE [GENOMIC DNA] OF 1-45</scope>
</reference>
<reference key="9">
    <citation type="journal article" date="2011" name="Annu. Rev. Immunol.">
        <title>SLAM family receptors and SAP adaptors in immunity.</title>
        <authorList>
            <person name="Cannons J.L."/>
            <person name="Tangye S.G."/>
            <person name="Schwartzberg P.L."/>
        </authorList>
    </citation>
    <scope>REVIEW</scope>
</reference>
<reference key="10">
    <citation type="journal article" date="2014" name="J. Exp. Med.">
        <title>EAT-2, a SAP-like adaptor, controls NK cell activation through phospholipase Cgamma, Ca++, and Erk, leading to granule polarization.</title>
        <authorList>
            <person name="Perez-Quintero L.A."/>
            <person name="Roncagalli R."/>
            <person name="Guo H."/>
            <person name="Latour S."/>
            <person name="Davidson D."/>
            <person name="Veillette A."/>
        </authorList>
    </citation>
    <scope>FUNCTION</scope>
    <scope>MUTAGENESIS OF TYR-127</scope>
    <scope>INTERACTION WITH PLCG1</scope>
    <scope>PHOSPHORYLATION AT TYR-127</scope>
</reference>
<evidence type="ECO:0000250" key="1">
    <source>
        <dbReference type="UniProtKB" id="O35324"/>
    </source>
</evidence>
<evidence type="ECO:0000255" key="2">
    <source>
        <dbReference type="PROSITE-ProRule" id="PRU00191"/>
    </source>
</evidence>
<evidence type="ECO:0000269" key="3">
    <source>
    </source>
</evidence>
<evidence type="ECO:0000269" key="4">
    <source>
    </source>
</evidence>
<evidence type="ECO:0000269" key="5">
    <source>
    </source>
</evidence>
<evidence type="ECO:0000303" key="6">
    <source>
    </source>
</evidence>
<evidence type="ECO:0000305" key="7">
    <source>
    </source>
</evidence>
<evidence type="ECO:0000305" key="8">
    <source>
    </source>
</evidence>
<evidence type="ECO:0007829" key="9">
    <source>
        <dbReference type="PDB" id="5KAZ"/>
    </source>
</evidence>
<gene>
    <name type="primary">SH2D1B</name>
    <name type="synonym">EAT2</name>
</gene>
<organism>
    <name type="scientific">Homo sapiens</name>
    <name type="common">Human</name>
    <dbReference type="NCBI Taxonomy" id="9606"/>
    <lineage>
        <taxon>Eukaryota</taxon>
        <taxon>Metazoa</taxon>
        <taxon>Chordata</taxon>
        <taxon>Craniata</taxon>
        <taxon>Vertebrata</taxon>
        <taxon>Euteleostomi</taxon>
        <taxon>Mammalia</taxon>
        <taxon>Eutheria</taxon>
        <taxon>Euarchontoglires</taxon>
        <taxon>Primates</taxon>
        <taxon>Haplorrhini</taxon>
        <taxon>Catarrhini</taxon>
        <taxon>Hominidae</taxon>
        <taxon>Homo</taxon>
    </lineage>
</organism>
<comment type="function">
    <text evidence="1 3 5 7">Cytoplasmic adapter regulating receptors of the signaling lymphocytic activation molecule (SLAM) family such as CD84, SLAMF1, LY9 and CD244 (PubMed:11689425). In SLAM signaling seems to cooperate with SH2D1A/SAP. Plays a role in regulation of effector functions of natural killer (NK) cells by controlling signal transduction through CD244/2B4 without effecting its tyrosine phosphorylation; downstream signaling involves PLCG1 and ERK activation (PubMed:24687958). Activation of SLAMF7-mediated NK cell function does not effect receptor tyrosine phosphorylation but distal signaling (By similarity). In the context of NK cell-mediated cytotoxicity does not enhance conjugate formation with target cells but stimulates polarization of the microtubule-organizing center and cytotoxic granules toward the NK cell synapse (PubMed:24687958). Negatively regulates CD40-induced cytokine production in dendritic cells downstream of SLAM family receptors probably by inducing activation of the PI3K pathway to inhibit p38 MAPK and JNK activation (By similarity).</text>
</comment>
<comment type="subunit">
    <text evidence="1 3 5">Binds to the phosphorylated receptors CD84, SLAMF1, LY9 and CD244. Does not bind to non-phosphorylated SLAMF1 (PubMed:11689425). Interacts with SLAMF7 (via ITSM phosphorylated on 'Tyr-304'). Interacts with Src kinases HCK, LYN, FYN, FGR and LCK (via kinase domains) (By similarity). Interacts (phosphorylated at Tyr-127) with PLCG1.</text>
</comment>
<comment type="interaction">
    <interactant intactId="EBI-3923013">
        <id>O14796</id>
    </interactant>
    <interactant intactId="EBI-712648">
        <id>O95994</id>
        <label>AGR2</label>
    </interactant>
    <organismsDiffer>false</organismsDiffer>
    <experiments>3</experiments>
</comment>
<comment type="interaction">
    <interactant intactId="EBI-3923013">
        <id>O14796</id>
    </interactant>
    <interactant intactId="EBI-608057">
        <id>P10275</id>
        <label>AR</label>
    </interactant>
    <organismsDiffer>false</organismsDiffer>
    <experiments>3</experiments>
</comment>
<comment type="interaction">
    <interactant intactId="EBI-3923013">
        <id>O14796</id>
    </interactant>
    <interactant intactId="EBI-2105445">
        <id>P51451</id>
        <label>BLK</label>
    </interactant>
    <organismsDiffer>false</organismsDiffer>
    <experiments>3</experiments>
</comment>
<comment type="interaction">
    <interactant intactId="EBI-3923013">
        <id>O14796</id>
    </interactant>
    <interactant intactId="EBI-1580565">
        <id>Q9BZW8</id>
        <label>CD244</label>
    </interactant>
    <organismsDiffer>false</organismsDiffer>
    <experiments>7</experiments>
</comment>
<comment type="interaction">
    <interactant intactId="EBI-3923013">
        <id>O14796</id>
    </interactant>
    <interactant intactId="EBI-6691679">
        <id>Q9UIB8</id>
        <label>CD84</label>
    </interactant>
    <organismsDiffer>false</organismsDiffer>
    <experiments>3</experiments>
</comment>
<comment type="interaction">
    <interactant intactId="EBI-3923013">
        <id>O14796</id>
    </interactant>
    <interactant intactId="EBI-742054">
        <id>Q96D03</id>
        <label>DDIT4L</label>
    </interactant>
    <organismsDiffer>false</organismsDiffer>
    <experiments>3</experiments>
</comment>
<comment type="interaction">
    <interactant intactId="EBI-3923013">
        <id>O14796</id>
    </interactant>
    <interactant intactId="EBI-852851">
        <id>P01100</id>
        <label>FOS</label>
    </interactant>
    <organismsDiffer>false</organismsDiffer>
    <experiments>3</experiments>
</comment>
<comment type="interaction">
    <interactant intactId="EBI-3923013">
        <id>O14796</id>
    </interactant>
    <interactant intactId="EBI-517684">
        <id>Q13480</id>
        <label>GAB1</label>
    </interactant>
    <organismsDiffer>false</organismsDiffer>
    <experiments>8</experiments>
</comment>
<comment type="interaction">
    <interactant intactId="EBI-3923013">
        <id>O14796</id>
    </interactant>
    <interactant intactId="EBI-1379503">
        <id>P10721</id>
        <label>KIT</label>
    </interactant>
    <organismsDiffer>false</organismsDiffer>
    <experiments>8</experiments>
</comment>
<comment type="interaction">
    <interactant intactId="EBI-3923013">
        <id>O14796</id>
    </interactant>
    <interactant intactId="EBI-751857">
        <id>O15481</id>
        <label>MAGEB4</label>
    </interactant>
    <organismsDiffer>false</organismsDiffer>
    <experiments>3</experiments>
</comment>
<comment type="interaction">
    <interactant intactId="EBI-3923013">
        <id>O14796</id>
    </interactant>
    <interactant intactId="EBI-16439278">
        <id>Q6FHY5</id>
        <label>MEOX2</label>
    </interactant>
    <organismsDiffer>false</organismsDiffer>
    <experiments>3</experiments>
</comment>
<comment type="interaction">
    <interactant intactId="EBI-3923013">
        <id>O14796</id>
    </interactant>
    <interactant intactId="EBI-1039152">
        <id>P08581</id>
        <label>MET</label>
    </interactant>
    <organismsDiffer>false</organismsDiffer>
    <experiments>6</experiments>
</comment>
<comment type="interaction">
    <interactant intactId="EBI-3923013">
        <id>O14796</id>
    </interactant>
    <interactant intactId="EBI-10271199">
        <id>Q8NI38</id>
        <label>NFKBID</label>
    </interactant>
    <organismsDiffer>false</organismsDiffer>
    <experiments>3</experiments>
</comment>
<comment type="interaction">
    <interactant intactId="EBI-3923013">
        <id>O14796</id>
    </interactant>
    <interactant intactId="EBI-3867416">
        <id>Q8TAK6</id>
        <label>OLIG1</label>
    </interactant>
    <organismsDiffer>false</organismsDiffer>
    <experiments>2</experiments>
</comment>
<comment type="interaction">
    <interactant intactId="EBI-3923013">
        <id>O14796</id>
    </interactant>
    <interactant intactId="EBI-79387">
        <id>P19174</id>
        <label>PLCG1</label>
    </interactant>
    <organismsDiffer>false</organismsDiffer>
    <experiments>2</experiments>
</comment>
<comment type="interaction">
    <interactant intactId="EBI-3923013">
        <id>O14796</id>
    </interactant>
    <interactant intactId="EBI-617403">
        <id>P16885</id>
        <label>PLCG2</label>
    </interactant>
    <organismsDiffer>false</organismsDiffer>
    <experiments>2</experiments>
</comment>
<comment type="interaction">
    <interactant intactId="EBI-3923013">
        <id>O14796</id>
    </interactant>
    <interactant intactId="EBI-14058448">
        <id>Q96DU3</id>
        <label>SLAMF6</label>
    </interactant>
    <organismsDiffer>false</organismsDiffer>
    <experiments>4</experiments>
</comment>
<comment type="interaction">
    <interactant intactId="EBI-3923013">
        <id>O14796</id>
    </interactant>
    <interactant intactId="EBI-621482">
        <id>P12931</id>
        <label>SRC</label>
    </interactant>
    <organismsDiffer>false</organismsDiffer>
    <experiments>3</experiments>
</comment>
<comment type="interaction">
    <interactant intactId="EBI-3923013">
        <id>O14796</id>
    </interactant>
    <interactant intactId="EBI-11952764">
        <id>Q99081-3</id>
        <label>TCF12</label>
    </interactant>
    <organismsDiffer>false</organismsDiffer>
    <experiments>3</experiments>
</comment>
<comment type="interaction">
    <interactant intactId="EBI-3923013">
        <id>O14796</id>
    </interactant>
    <interactant intactId="EBI-11994780">
        <id>Q07912-2</id>
        <label>TNK2</label>
    </interactant>
    <organismsDiffer>false</organismsDiffer>
    <experiments>3</experiments>
</comment>
<comment type="interaction">
    <interactant intactId="EBI-3923013">
        <id>O14796</id>
    </interactant>
    <interactant intactId="EBI-2130429">
        <id>Q9BYV2</id>
        <label>TRIM54</label>
    </interactant>
    <organismsDiffer>false</organismsDiffer>
    <experiments>6</experiments>
</comment>
<comment type="interaction">
    <interactant intactId="EBI-3923013">
        <id>O14796</id>
    </interactant>
    <interactant intactId="EBI-877761">
        <id>Q53HF2</id>
    </interactant>
    <organismsDiffer>false</organismsDiffer>
    <experiments>3</experiments>
</comment>
<comment type="interaction">
    <interactant intactId="EBI-25899828">
        <id>O14796-2</id>
    </interactant>
    <interactant intactId="EBI-720609">
        <id>O76024</id>
        <label>WFS1</label>
    </interactant>
    <organismsDiffer>false</organismsDiffer>
    <experiments>3</experiments>
</comment>
<comment type="alternative products">
    <event type="alternative splicing"/>
    <isoform>
        <id>O14796-1</id>
        <name>1</name>
        <sequence type="displayed"/>
    </isoform>
    <isoform>
        <id>O14796-2</id>
        <name>2</name>
        <sequence type="described" ref="VSP_010341"/>
    </isoform>
</comment>
<sequence length="132" mass="15297">MDLPYYHGRLTKQDCETLLLKEGVDGNFLLRDSESIPGVLCLCVSFKNIVYTYRIFREKHGYYRIQTAEGSPKQVFPSLKELISKFEKPNQGMVVHLLKPIKRTSPSLRWRGLKLELETFVNSNSDYVDVLP</sequence>
<feature type="chain" id="PRO_0000097724" description="SH2 domain-containing protein 1B">
    <location>
        <begin position="1"/>
        <end position="132"/>
    </location>
</feature>
<feature type="domain" description="SH2" evidence="2">
    <location>
        <begin position="5"/>
        <end position="101"/>
    </location>
</feature>
<feature type="modified residue" description="Phosphotyrosine" evidence="8">
    <location>
        <position position="127"/>
    </location>
</feature>
<feature type="splice variant" id="VSP_010341" description="In isoform 2." evidence="6">
    <location>
        <begin position="67"/>
        <end position="121"/>
    </location>
</feature>
<feature type="sequence variant" id="VAR_051347" description="In dbSNP:rs35688243.">
    <original>I</original>
    <variation>T</variation>
    <location>
        <position position="36"/>
    </location>
</feature>
<feature type="sequence variant" id="VAR_051348" description="In dbSNP:rs34001279." evidence="4">
    <original>N</original>
    <variation>K</variation>
    <location>
        <position position="122"/>
    </location>
</feature>
<feature type="mutagenesis site" description="No stimulation of granule polarization during NK-mediated cytotoxicity, abolishes activation of CD244/2B4-mediated cytotoxicity, abolishes augmentation of CD244/2B4-triggered PLCG1 phosphorylation and ERK activation." evidence="5">
    <original>Y</original>
    <variation>F</variation>
    <location>
        <position position="127"/>
    </location>
</feature>
<feature type="helix" evidence="9">
    <location>
        <begin position="12"/>
        <end position="20"/>
    </location>
</feature>
<feature type="strand" evidence="9">
    <location>
        <begin position="27"/>
        <end position="32"/>
    </location>
</feature>
<feature type="strand" evidence="9">
    <location>
        <begin position="34"/>
        <end position="36"/>
    </location>
</feature>
<feature type="strand" evidence="9">
    <location>
        <begin position="40"/>
        <end position="46"/>
    </location>
</feature>
<feature type="strand" evidence="9">
    <location>
        <begin position="49"/>
        <end position="57"/>
    </location>
</feature>
<feature type="strand" evidence="9">
    <location>
        <begin position="63"/>
        <end position="65"/>
    </location>
</feature>
<feature type="strand" evidence="9">
    <location>
        <begin position="74"/>
        <end position="78"/>
    </location>
</feature>
<feature type="helix" evidence="9">
    <location>
        <begin position="79"/>
        <end position="87"/>
    </location>
</feature>
<feature type="strand" evidence="9">
    <location>
        <begin position="88"/>
        <end position="95"/>
    </location>
</feature>
<name>SH21B_HUMAN</name>